<keyword id="KW-0880">Kelch repeat</keyword>
<keyword id="KW-1185">Reference proteome</keyword>
<keyword id="KW-0677">Repeat</keyword>
<sequence>MGPRVLPLLEPGCRPQAGKWYRMAPRGEWPRGRVGHGCLFVPGGSGRVLLLGGADPAGAFADAHFVELGAHLWAPAAWSGLRPRYEHATFLSACRPPRLWVFGGAHRAGNRSCVQVLDPEIGTWESPEVTGIPPLPRTFHTSSAAIGDCLYVFGGGDKGAEPVKDQQLHVFDTVALAWTQPDTHGDPPSPRHGHVVVAVGTKLFIHGGLAGDIFYNDLFCIDTTDMKWVKIAATGDVPGGRASHSSAVFKDHLYIFGGIGPDGTLDTTYKYHIEEQQWTLLQFDSPLPAGRLDHAMCVIPWRVGKNGDAAAVSKEDKAEPTASAGDRAGHLCRGQDKKACTEDTMMHLLLIFGGMDTQAEIYRDCIVSLIE</sequence>
<name>RABEK_CHICK</name>
<protein>
    <recommendedName>
        <fullName>Rab9 effector protein with kelch motifs</fullName>
    </recommendedName>
</protein>
<organism>
    <name type="scientific">Gallus gallus</name>
    <name type="common">Chicken</name>
    <dbReference type="NCBI Taxonomy" id="9031"/>
    <lineage>
        <taxon>Eukaryota</taxon>
        <taxon>Metazoa</taxon>
        <taxon>Chordata</taxon>
        <taxon>Craniata</taxon>
        <taxon>Vertebrata</taxon>
        <taxon>Euteleostomi</taxon>
        <taxon>Archelosauria</taxon>
        <taxon>Archosauria</taxon>
        <taxon>Dinosauria</taxon>
        <taxon>Saurischia</taxon>
        <taxon>Theropoda</taxon>
        <taxon>Coelurosauria</taxon>
        <taxon>Aves</taxon>
        <taxon>Neognathae</taxon>
        <taxon>Galloanserae</taxon>
        <taxon>Galliformes</taxon>
        <taxon>Phasianidae</taxon>
        <taxon>Phasianinae</taxon>
        <taxon>Gallus</taxon>
    </lineage>
</organism>
<comment type="function">
    <text evidence="1">Rab9 effector required for endosome to trans-Golgi network (TGN) transport.</text>
</comment>
<proteinExistence type="evidence at transcript level"/>
<evidence type="ECO:0000250" key="1"/>
<gene>
    <name type="primary">RABEPK</name>
    <name type="ORF">RCJMB04_20p14</name>
</gene>
<dbReference type="EMBL" id="AJ720597">
    <property type="protein sequence ID" value="CAG32256.1"/>
    <property type="molecule type" value="mRNA"/>
</dbReference>
<dbReference type="RefSeq" id="NP_001074360.1">
    <property type="nucleotide sequence ID" value="NM_001080891.1"/>
</dbReference>
<dbReference type="SMR" id="Q5ZJ37"/>
<dbReference type="FunCoup" id="Q5ZJ37">
    <property type="interactions" value="471"/>
</dbReference>
<dbReference type="STRING" id="9031.ENSGALP00000050568"/>
<dbReference type="PaxDb" id="9031-ENSGALP00000001477"/>
<dbReference type="GeneID" id="772357"/>
<dbReference type="KEGG" id="gga:772357"/>
<dbReference type="CTD" id="10244"/>
<dbReference type="VEuPathDB" id="HostDB:geneid_772357"/>
<dbReference type="eggNOG" id="KOG0379">
    <property type="taxonomic scope" value="Eukaryota"/>
</dbReference>
<dbReference type="InParanoid" id="Q5ZJ37"/>
<dbReference type="OrthoDB" id="10251809at2759"/>
<dbReference type="PhylomeDB" id="Q5ZJ37"/>
<dbReference type="PRO" id="PR:Q5ZJ37"/>
<dbReference type="Proteomes" id="UP000000539">
    <property type="component" value="Unassembled WGS sequence"/>
</dbReference>
<dbReference type="Gene3D" id="2.120.10.80">
    <property type="entry name" value="Kelch-type beta propeller"/>
    <property type="match status" value="2"/>
</dbReference>
<dbReference type="InterPro" id="IPR015915">
    <property type="entry name" value="Kelch-typ_b-propeller"/>
</dbReference>
<dbReference type="InterPro" id="IPR006652">
    <property type="entry name" value="Kelch_1"/>
</dbReference>
<dbReference type="InterPro" id="IPR052124">
    <property type="entry name" value="Rab9_kelch_effector"/>
</dbReference>
<dbReference type="PANTHER" id="PTHR46647">
    <property type="entry name" value="RAB9 EFFECTOR PROTEIN WITH KELCH MOTIFS"/>
    <property type="match status" value="1"/>
</dbReference>
<dbReference type="PANTHER" id="PTHR46647:SF1">
    <property type="entry name" value="RAB9 EFFECTOR PROTEIN WITH KELCH MOTIFS"/>
    <property type="match status" value="1"/>
</dbReference>
<dbReference type="Pfam" id="PF24681">
    <property type="entry name" value="Kelch_KLHDC2_KLHL20_DRC7"/>
    <property type="match status" value="1"/>
</dbReference>
<dbReference type="SMART" id="SM00612">
    <property type="entry name" value="Kelch"/>
    <property type="match status" value="2"/>
</dbReference>
<dbReference type="SUPFAM" id="SSF117281">
    <property type="entry name" value="Kelch motif"/>
    <property type="match status" value="1"/>
</dbReference>
<reference key="1">
    <citation type="journal article" date="2005" name="Genome Biol.">
        <title>Full-length cDNAs from chicken bursal lymphocytes to facilitate gene function analysis.</title>
        <authorList>
            <person name="Caldwell R.B."/>
            <person name="Kierzek A.M."/>
            <person name="Arakawa H."/>
            <person name="Bezzubov Y."/>
            <person name="Zaim J."/>
            <person name="Fiedler P."/>
            <person name="Kutter S."/>
            <person name="Blagodatski A."/>
            <person name="Kostovska D."/>
            <person name="Koter M."/>
            <person name="Plachy J."/>
            <person name="Carninci P."/>
            <person name="Hayashizaki Y."/>
            <person name="Buerstedde J.-M."/>
        </authorList>
    </citation>
    <scope>NUCLEOTIDE SEQUENCE [LARGE SCALE MRNA]</scope>
    <source>
        <strain>CB</strain>
        <tissue>Bursa of Fabricius</tissue>
    </source>
</reference>
<accession>Q5ZJ37</accession>
<feature type="chain" id="PRO_0000280619" description="Rab9 effector protein with kelch motifs">
    <location>
        <begin position="1"/>
        <end position="371"/>
    </location>
</feature>
<feature type="repeat" description="Kelch 1">
    <location>
        <begin position="47"/>
        <end position="93"/>
    </location>
</feature>
<feature type="repeat" description="Kelch 2">
    <location>
        <begin position="98"/>
        <end position="144"/>
    </location>
</feature>
<feature type="repeat" description="Kelch 3">
    <location>
        <begin position="149"/>
        <end position="201"/>
    </location>
</feature>
<feature type="repeat" description="Kelch 4">
    <location>
        <begin position="202"/>
        <end position="251"/>
    </location>
</feature>
<feature type="repeat" description="Kelch 5">
    <location>
        <begin position="252"/>
        <end position="301"/>
    </location>
</feature>
<feature type="repeat" description="Kelch 6">
    <location>
        <begin position="348"/>
        <end position="371"/>
    </location>
</feature>